<comment type="function">
    <text>Possesses antifungal activity and is also active on two tested Gram-positive bacteria but is non-toxic for Gram-negative bacteria and cultured human cells.</text>
</comment>
<comment type="subunit">
    <text>Homodimer.</text>
</comment>
<comment type="subcellular location">
    <subcellularLocation>
        <location>Secreted</location>
    </subcellularLocation>
</comment>
<comment type="tissue specificity">
    <text>Seed specific.</text>
</comment>
<comment type="domain">
    <text evidence="1">The presence of a 'disulfide through disulfide knot' structurally defines this protein as a knottin.</text>
</comment>
<comment type="similarity">
    <text evidence="3">Belongs to the AMP family.</text>
</comment>
<feature type="signal peptide" evidence="2">
    <location>
        <begin position="1"/>
        <end position="27"/>
    </location>
</feature>
<feature type="chain" id="PRO_0000001311" description="Antimicrobial peptide 2">
    <location>
        <begin position="28"/>
        <end position="63"/>
    </location>
</feature>
<feature type="disulfide bond" evidence="1">
    <location>
        <begin position="28"/>
        <end position="45"/>
    </location>
</feature>
<feature type="disulfide bond" evidence="1">
    <location>
        <begin position="35"/>
        <end position="49"/>
    </location>
</feature>
<feature type="disulfide bond" evidence="1">
    <location>
        <begin position="44"/>
        <end position="60"/>
    </location>
</feature>
<proteinExistence type="evidence at protein level"/>
<protein>
    <recommendedName>
        <fullName>Antimicrobial peptide 2</fullName>
    </recommendedName>
    <alternativeName>
        <fullName>MJ-AMP2</fullName>
        <shortName>AMP2</shortName>
    </alternativeName>
</protein>
<reference key="1">
    <citation type="journal article" date="1995" name="Plant Mol. Biol.">
        <title>Cloning and characterization of two cDNA clones encoding seed-specific antimicrobial peptides from Mirabilis jalapa L.</title>
        <authorList>
            <person name="de Bolle M.F."/>
            <person name="Eggermont K."/>
            <person name="Duncan R.E."/>
            <person name="Osborn R.W."/>
            <person name="Terras F.R.G."/>
            <person name="Broekaert W.F."/>
        </authorList>
    </citation>
    <scope>NUCLEOTIDE SEQUENCE [MRNA]</scope>
    <source>
        <tissue>Seed</tissue>
    </source>
</reference>
<reference key="2">
    <citation type="journal article" date="1992" name="J. Biol. Chem.">
        <title>Isolation and characterization of a novel class of plant antimicrobial peptides from Mirabilis jalapa L. seeds.</title>
        <authorList>
            <person name="Cammue B.P.A."/>
            <person name="de Bolle M.F.C."/>
            <person name="Terras F.R.G."/>
            <person name="Proost P."/>
            <person name="van Damme J."/>
            <person name="Rees S.B."/>
            <person name="Vanderleyden J."/>
            <person name="Broekaert W.F."/>
        </authorList>
    </citation>
    <scope>PROTEIN SEQUENCE OF 28-63</scope>
    <source>
        <tissue>Seed</tissue>
    </source>
</reference>
<gene>
    <name type="primary">AMP2</name>
</gene>
<dbReference type="EMBL" id="U15539">
    <property type="protein sequence ID" value="AAA80485.1"/>
    <property type="molecule type" value="mRNA"/>
</dbReference>
<dbReference type="PIR" id="S57816">
    <property type="entry name" value="S57816"/>
</dbReference>
<dbReference type="SMR" id="P25404"/>
<dbReference type="GO" id="GO:0005576">
    <property type="term" value="C:extracellular region"/>
    <property type="evidence" value="ECO:0007669"/>
    <property type="project" value="UniProtKB-SubCell"/>
</dbReference>
<dbReference type="GO" id="GO:0042742">
    <property type="term" value="P:defense response to bacterium"/>
    <property type="evidence" value="ECO:0007669"/>
    <property type="project" value="UniProtKB-KW"/>
</dbReference>
<dbReference type="GO" id="GO:0050832">
    <property type="term" value="P:defense response to fungus"/>
    <property type="evidence" value="ECO:0007669"/>
    <property type="project" value="UniProtKB-KW"/>
</dbReference>
<dbReference type="GO" id="GO:0031640">
    <property type="term" value="P:killing of cells of another organism"/>
    <property type="evidence" value="ECO:0007669"/>
    <property type="project" value="UniProtKB-KW"/>
</dbReference>
<dbReference type="InterPro" id="IPR013006">
    <property type="entry name" value="Antimicrobial_C6_CS"/>
</dbReference>
<dbReference type="InterPro" id="IPR009101">
    <property type="entry name" value="Gurmarin/antifun_pep"/>
</dbReference>
<dbReference type="InterPro" id="IPR024206">
    <property type="entry name" value="Gurmarin/antimicrobial_peptd"/>
</dbReference>
<dbReference type="Pfam" id="PF11410">
    <property type="entry name" value="Antifungal_pept"/>
    <property type="match status" value="1"/>
</dbReference>
<dbReference type="SUPFAM" id="SSF57048">
    <property type="entry name" value="Gurmarin-like"/>
    <property type="match status" value="1"/>
</dbReference>
<dbReference type="PROSITE" id="PS60011">
    <property type="entry name" value="PLANT_C6_AMP"/>
    <property type="match status" value="1"/>
</dbReference>
<evidence type="ECO:0000250" key="1"/>
<evidence type="ECO:0000269" key="2">
    <source>
    </source>
</evidence>
<evidence type="ECO:0000305" key="3"/>
<sequence>MAKVPIAFLKFVIVLILFIAMSGMIEACIGNGGRCNENVGPPYCCSGFCLRQPNQGYGVCRNR</sequence>
<name>AMP2_MIRJA</name>
<accession>P25404</accession>
<organism>
    <name type="scientific">Mirabilis jalapa</name>
    <name type="common">Garden four-o'clock</name>
    <dbReference type="NCBI Taxonomy" id="3538"/>
    <lineage>
        <taxon>Eukaryota</taxon>
        <taxon>Viridiplantae</taxon>
        <taxon>Streptophyta</taxon>
        <taxon>Embryophyta</taxon>
        <taxon>Tracheophyta</taxon>
        <taxon>Spermatophyta</taxon>
        <taxon>Magnoliopsida</taxon>
        <taxon>eudicotyledons</taxon>
        <taxon>Gunneridae</taxon>
        <taxon>Pentapetalae</taxon>
        <taxon>Caryophyllales</taxon>
        <taxon>Nyctaginaceae</taxon>
        <taxon>Mirabilis</taxon>
    </lineage>
</organism>
<keyword id="KW-0044">Antibiotic</keyword>
<keyword id="KW-0929">Antimicrobial</keyword>
<keyword id="KW-0903">Direct protein sequencing</keyword>
<keyword id="KW-1015">Disulfide bond</keyword>
<keyword id="KW-0295">Fungicide</keyword>
<keyword id="KW-0960">Knottin</keyword>
<keyword id="KW-0611">Plant defense</keyword>
<keyword id="KW-0964">Secreted</keyword>
<keyword id="KW-0732">Signal</keyword>